<comment type="function">
    <text evidence="1">Catalyzes the hydrolysis of N-succinyl-L,L-diaminopimelic acid (SDAP), forming succinate and LL-2,6-diaminopimelate (DAP), an intermediate involved in the bacterial biosynthesis of lysine and meso-diaminopimelic acid, an essential component of bacterial cell walls.</text>
</comment>
<comment type="catalytic activity">
    <reaction evidence="1">
        <text>N-succinyl-(2S,6S)-2,6-diaminopimelate + H2O = (2S,6S)-2,6-diaminopimelate + succinate</text>
        <dbReference type="Rhea" id="RHEA:22608"/>
        <dbReference type="ChEBI" id="CHEBI:15377"/>
        <dbReference type="ChEBI" id="CHEBI:30031"/>
        <dbReference type="ChEBI" id="CHEBI:57609"/>
        <dbReference type="ChEBI" id="CHEBI:58087"/>
        <dbReference type="EC" id="3.5.1.18"/>
    </reaction>
</comment>
<comment type="cofactor">
    <cofactor evidence="1">
        <name>Zn(2+)</name>
        <dbReference type="ChEBI" id="CHEBI:29105"/>
    </cofactor>
    <cofactor evidence="1">
        <name>Co(2+)</name>
        <dbReference type="ChEBI" id="CHEBI:48828"/>
    </cofactor>
    <text evidence="1">Binds 2 Zn(2+) or Co(2+) ions per subunit.</text>
</comment>
<comment type="pathway">
    <text evidence="1">Amino-acid biosynthesis; L-lysine biosynthesis via DAP pathway; LL-2,6-diaminopimelate from (S)-tetrahydrodipicolinate (succinylase route): step 3/3.</text>
</comment>
<comment type="subunit">
    <text evidence="1">Homodimer.</text>
</comment>
<comment type="similarity">
    <text evidence="1">Belongs to the peptidase M20A family. DapE subfamily.</text>
</comment>
<comment type="sequence caution" evidence="2">
    <conflict type="erroneous initiation">
        <sequence resource="EMBL-CDS" id="ABY73295"/>
    </conflict>
</comment>
<accession>B0BVN5</accession>
<proteinExistence type="inferred from homology"/>
<dbReference type="EC" id="3.5.1.18" evidence="1"/>
<dbReference type="EMBL" id="CP000766">
    <property type="protein sequence ID" value="ABY73295.1"/>
    <property type="status" value="ALT_INIT"/>
    <property type="molecule type" value="Genomic_DNA"/>
</dbReference>
<dbReference type="RefSeq" id="WP_012151455.1">
    <property type="nucleotide sequence ID" value="NC_010263.3"/>
</dbReference>
<dbReference type="SMR" id="B0BVN5"/>
<dbReference type="GeneID" id="79937946"/>
<dbReference type="KEGG" id="rrj:RrIowa_1579"/>
<dbReference type="eggNOG" id="COG0624">
    <property type="taxonomic scope" value="Bacteria"/>
</dbReference>
<dbReference type="HOGENOM" id="CLU_021802_4_0_5"/>
<dbReference type="UniPathway" id="UPA00034">
    <property type="reaction ID" value="UER00021"/>
</dbReference>
<dbReference type="Proteomes" id="UP000000796">
    <property type="component" value="Chromosome"/>
</dbReference>
<dbReference type="GO" id="GO:0008777">
    <property type="term" value="F:acetylornithine deacetylase activity"/>
    <property type="evidence" value="ECO:0007669"/>
    <property type="project" value="TreeGrafter"/>
</dbReference>
<dbReference type="GO" id="GO:0050897">
    <property type="term" value="F:cobalt ion binding"/>
    <property type="evidence" value="ECO:0007669"/>
    <property type="project" value="UniProtKB-UniRule"/>
</dbReference>
<dbReference type="GO" id="GO:0009014">
    <property type="term" value="F:succinyl-diaminopimelate desuccinylase activity"/>
    <property type="evidence" value="ECO:0007669"/>
    <property type="project" value="UniProtKB-UniRule"/>
</dbReference>
<dbReference type="GO" id="GO:0008270">
    <property type="term" value="F:zinc ion binding"/>
    <property type="evidence" value="ECO:0007669"/>
    <property type="project" value="UniProtKB-UniRule"/>
</dbReference>
<dbReference type="GO" id="GO:0019877">
    <property type="term" value="P:diaminopimelate biosynthetic process"/>
    <property type="evidence" value="ECO:0007669"/>
    <property type="project" value="UniProtKB-UniRule"/>
</dbReference>
<dbReference type="GO" id="GO:0006526">
    <property type="term" value="P:L-arginine biosynthetic process"/>
    <property type="evidence" value="ECO:0007669"/>
    <property type="project" value="TreeGrafter"/>
</dbReference>
<dbReference type="GO" id="GO:0009089">
    <property type="term" value="P:lysine biosynthetic process via diaminopimelate"/>
    <property type="evidence" value="ECO:0007669"/>
    <property type="project" value="UniProtKB-UniRule"/>
</dbReference>
<dbReference type="CDD" id="cd03891">
    <property type="entry name" value="M20_DapE_proteobac"/>
    <property type="match status" value="1"/>
</dbReference>
<dbReference type="Gene3D" id="3.30.70.360">
    <property type="match status" value="1"/>
</dbReference>
<dbReference type="Gene3D" id="3.40.630.10">
    <property type="entry name" value="Zn peptidases"/>
    <property type="match status" value="1"/>
</dbReference>
<dbReference type="HAMAP" id="MF_01690">
    <property type="entry name" value="DapE"/>
    <property type="match status" value="1"/>
</dbReference>
<dbReference type="InterPro" id="IPR001261">
    <property type="entry name" value="ArgE/DapE_CS"/>
</dbReference>
<dbReference type="InterPro" id="IPR036264">
    <property type="entry name" value="Bact_exopeptidase_dim_dom"/>
</dbReference>
<dbReference type="InterPro" id="IPR005941">
    <property type="entry name" value="DapE_proteobac"/>
</dbReference>
<dbReference type="InterPro" id="IPR002933">
    <property type="entry name" value="Peptidase_M20"/>
</dbReference>
<dbReference type="InterPro" id="IPR011650">
    <property type="entry name" value="Peptidase_M20_dimer"/>
</dbReference>
<dbReference type="InterPro" id="IPR050072">
    <property type="entry name" value="Peptidase_M20A"/>
</dbReference>
<dbReference type="NCBIfam" id="TIGR01246">
    <property type="entry name" value="dapE_proteo"/>
    <property type="match status" value="1"/>
</dbReference>
<dbReference type="NCBIfam" id="NF009557">
    <property type="entry name" value="PRK13009.1"/>
    <property type="match status" value="1"/>
</dbReference>
<dbReference type="PANTHER" id="PTHR43808">
    <property type="entry name" value="ACETYLORNITHINE DEACETYLASE"/>
    <property type="match status" value="1"/>
</dbReference>
<dbReference type="PANTHER" id="PTHR43808:SF31">
    <property type="entry name" value="N-ACETYL-L-CITRULLINE DEACETYLASE"/>
    <property type="match status" value="1"/>
</dbReference>
<dbReference type="Pfam" id="PF07687">
    <property type="entry name" value="M20_dimer"/>
    <property type="match status" value="1"/>
</dbReference>
<dbReference type="Pfam" id="PF01546">
    <property type="entry name" value="Peptidase_M20"/>
    <property type="match status" value="1"/>
</dbReference>
<dbReference type="SUPFAM" id="SSF55031">
    <property type="entry name" value="Bacterial exopeptidase dimerisation domain"/>
    <property type="match status" value="1"/>
</dbReference>
<dbReference type="SUPFAM" id="SSF53187">
    <property type="entry name" value="Zn-dependent exopeptidases"/>
    <property type="match status" value="1"/>
</dbReference>
<dbReference type="PROSITE" id="PS00759">
    <property type="entry name" value="ARGE_DAPE_CPG2_2"/>
    <property type="match status" value="1"/>
</dbReference>
<organism>
    <name type="scientific">Rickettsia rickettsii (strain Iowa)</name>
    <dbReference type="NCBI Taxonomy" id="452659"/>
    <lineage>
        <taxon>Bacteria</taxon>
        <taxon>Pseudomonadati</taxon>
        <taxon>Pseudomonadota</taxon>
        <taxon>Alphaproteobacteria</taxon>
        <taxon>Rickettsiales</taxon>
        <taxon>Rickettsiaceae</taxon>
        <taxon>Rickettsieae</taxon>
        <taxon>Rickettsia</taxon>
        <taxon>spotted fever group</taxon>
    </lineage>
</organism>
<name>DAPE_RICRO</name>
<sequence>MYINYLKDLISFKSVTPKSDGAIEYINDLLKQHGFKTEIKIFGDSKSEQVTNLYAVFGSNEPNICFVGHVDVVLEGNHELWHNASPFKVSQQDGKIYGRGAVDMKGAIACFLAASLDFIKNNTDFKGSISFLLTSDEEGKAKHGTKEMLQYIYDQGYKINFAIVGEPTCEKEIGDAIKIGRRGSVNFKLNIEGLSGHVAYPHKANNPLPCLIIILNELTNIKLDEGTEFFQRSNLEVTNIEVSNNTSNVIPASTEASFNIRFNNLHSAETLAKQVEEIIKQHCKEYKVDYKLEYSSSAESFIQNPSDKIKEFAKVVEHTLKIKPEFSTSGGTSDARFVKNYCPLVEFGLLSETAHKINEYTKISDLQKLYDVYYNFLMEIL</sequence>
<keyword id="KW-0028">Amino-acid biosynthesis</keyword>
<keyword id="KW-0170">Cobalt</keyword>
<keyword id="KW-0220">Diaminopimelate biosynthesis</keyword>
<keyword id="KW-0378">Hydrolase</keyword>
<keyword id="KW-0457">Lysine biosynthesis</keyword>
<keyword id="KW-0479">Metal-binding</keyword>
<keyword id="KW-0862">Zinc</keyword>
<feature type="chain" id="PRO_0000375705" description="Succinyl-diaminopimelate desuccinylase">
    <location>
        <begin position="1"/>
        <end position="381"/>
    </location>
</feature>
<feature type="active site" evidence="1">
    <location>
        <position position="71"/>
    </location>
</feature>
<feature type="active site" description="Proton acceptor" evidence="1">
    <location>
        <position position="137"/>
    </location>
</feature>
<feature type="binding site" evidence="1">
    <location>
        <position position="69"/>
    </location>
    <ligand>
        <name>Zn(2+)</name>
        <dbReference type="ChEBI" id="CHEBI:29105"/>
        <label>1</label>
    </ligand>
</feature>
<feature type="binding site" evidence="1">
    <location>
        <position position="103"/>
    </location>
    <ligand>
        <name>Zn(2+)</name>
        <dbReference type="ChEBI" id="CHEBI:29105"/>
        <label>1</label>
    </ligand>
</feature>
<feature type="binding site" evidence="1">
    <location>
        <position position="103"/>
    </location>
    <ligand>
        <name>Zn(2+)</name>
        <dbReference type="ChEBI" id="CHEBI:29105"/>
        <label>2</label>
    </ligand>
</feature>
<feature type="binding site" evidence="1">
    <location>
        <position position="138"/>
    </location>
    <ligand>
        <name>Zn(2+)</name>
        <dbReference type="ChEBI" id="CHEBI:29105"/>
        <label>2</label>
    </ligand>
</feature>
<feature type="binding site" evidence="1">
    <location>
        <position position="166"/>
    </location>
    <ligand>
        <name>Zn(2+)</name>
        <dbReference type="ChEBI" id="CHEBI:29105"/>
        <label>1</label>
    </ligand>
</feature>
<feature type="binding site" evidence="1">
    <location>
        <position position="355"/>
    </location>
    <ligand>
        <name>Zn(2+)</name>
        <dbReference type="ChEBI" id="CHEBI:29105"/>
        <label>2</label>
    </ligand>
</feature>
<reference key="1">
    <citation type="journal article" date="2008" name="Infect. Immun.">
        <title>Genomic comparison of virulent Rickettsia rickettsii Sheila Smith and avirulent Rickettsia rickettsii Iowa.</title>
        <authorList>
            <person name="Ellison D.W."/>
            <person name="Clark T.R."/>
            <person name="Sturdevant D.E."/>
            <person name="Virtaneva K."/>
            <person name="Porcella S.F."/>
            <person name="Hackstadt T."/>
        </authorList>
    </citation>
    <scope>NUCLEOTIDE SEQUENCE [LARGE SCALE GENOMIC DNA]</scope>
    <source>
        <strain>Iowa</strain>
    </source>
</reference>
<protein>
    <recommendedName>
        <fullName evidence="1">Succinyl-diaminopimelate desuccinylase</fullName>
        <shortName evidence="1">SDAP desuccinylase</shortName>
        <ecNumber evidence="1">3.5.1.18</ecNumber>
    </recommendedName>
    <alternativeName>
        <fullName evidence="1">N-succinyl-LL-2,6-diaminoheptanedioate amidohydrolase</fullName>
    </alternativeName>
</protein>
<gene>
    <name evidence="1" type="primary">dapE</name>
    <name type="ordered locus">RrIowa_1579</name>
</gene>
<evidence type="ECO:0000255" key="1">
    <source>
        <dbReference type="HAMAP-Rule" id="MF_01690"/>
    </source>
</evidence>
<evidence type="ECO:0000305" key="2"/>